<accession>A6LIU6</accession>
<organism>
    <name type="scientific">Parabacteroides distasonis (strain ATCC 8503 / DSM 20701 / CIP 104284 / JCM 5825 / NCTC 11152)</name>
    <dbReference type="NCBI Taxonomy" id="435591"/>
    <lineage>
        <taxon>Bacteria</taxon>
        <taxon>Pseudomonadati</taxon>
        <taxon>Bacteroidota</taxon>
        <taxon>Bacteroidia</taxon>
        <taxon>Bacteroidales</taxon>
        <taxon>Tannerellaceae</taxon>
        <taxon>Parabacteroides</taxon>
    </lineage>
</organism>
<feature type="chain" id="PRO_1000078785" description="Potassium-transporting ATPase potassium-binding subunit">
    <location>
        <begin position="1"/>
        <end position="569"/>
    </location>
</feature>
<feature type="transmembrane region" description="Helical" evidence="1">
    <location>
        <begin position="3"/>
        <end position="23"/>
    </location>
</feature>
<feature type="transmembrane region" description="Helical" evidence="1">
    <location>
        <begin position="64"/>
        <end position="84"/>
    </location>
</feature>
<feature type="transmembrane region" description="Helical" evidence="1">
    <location>
        <begin position="133"/>
        <end position="153"/>
    </location>
</feature>
<feature type="transmembrane region" description="Helical" evidence="1">
    <location>
        <begin position="179"/>
        <end position="199"/>
    </location>
</feature>
<feature type="transmembrane region" description="Helical" evidence="1">
    <location>
        <begin position="255"/>
        <end position="275"/>
    </location>
</feature>
<feature type="transmembrane region" description="Helical" evidence="1">
    <location>
        <begin position="281"/>
        <end position="301"/>
    </location>
</feature>
<feature type="transmembrane region" description="Helical" evidence="1">
    <location>
        <begin position="375"/>
        <end position="395"/>
    </location>
</feature>
<feature type="transmembrane region" description="Helical" evidence="1">
    <location>
        <begin position="421"/>
        <end position="441"/>
    </location>
</feature>
<feature type="transmembrane region" description="Helical" evidence="1">
    <location>
        <begin position="497"/>
        <end position="517"/>
    </location>
</feature>
<feature type="transmembrane region" description="Helical" evidence="1">
    <location>
        <begin position="535"/>
        <end position="555"/>
    </location>
</feature>
<gene>
    <name evidence="1" type="primary">kdpA</name>
    <name type="ordered locus">BDI_3930</name>
</gene>
<reference key="1">
    <citation type="journal article" date="2007" name="PLoS Biol.">
        <title>Evolution of symbiotic bacteria in the distal human intestine.</title>
        <authorList>
            <person name="Xu J."/>
            <person name="Mahowald M.A."/>
            <person name="Ley R.E."/>
            <person name="Lozupone C.A."/>
            <person name="Hamady M."/>
            <person name="Martens E.C."/>
            <person name="Henrissat B."/>
            <person name="Coutinho P.M."/>
            <person name="Minx P."/>
            <person name="Latreille P."/>
            <person name="Cordum H."/>
            <person name="Van Brunt A."/>
            <person name="Kim K."/>
            <person name="Fulton R.S."/>
            <person name="Fulton L.A."/>
            <person name="Clifton S.W."/>
            <person name="Wilson R.K."/>
            <person name="Knight R.D."/>
            <person name="Gordon J.I."/>
        </authorList>
    </citation>
    <scope>NUCLEOTIDE SEQUENCE [LARGE SCALE GENOMIC DNA]</scope>
    <source>
        <strain>ATCC 8503 / DSM 20701 / CIP 104284 / JCM 5825 / NCTC 11152</strain>
    </source>
</reference>
<sequence>MNTEILGVALQILLLLVISYPLGKHIAKVYKEGNDCMRFMAPIERFIYKLAGINPNEEMDWKAFLKSLLIINVFWFFWGMILLVSQGYLPLNPDGNSGQSPDLAFNTCISFMVNCNLQHYSGESGLTYFTQLFVIMLFQFITAATGMAAMAGIMKSMAAKTTKTIGNFWHYLVISCTRILFPMSLIVGFILIIQGTPMGFDSKMTIPTLEGAEQTVSQGPTAAIVPIKQLGTNGGGYFGVNSSHPLENPTYLTNIVECWSILIIPMALVFALGFYLKRKKLGYVIYGVMLFAYLLGVFCNVHYEMAGNPKIDEMGIDQSCGAMEGKETRLGPGATALWSVTTTVTSNGSVNGMHDSTMPLSGMVEMLNMQINTWFGGVGVGFMNYYAFLIIAVFISGLMVGRTPEFLGKKVEAREMKIATIVSLAHPFVILIFTAISSYVWVYAPEFVESEGGWLNNPGFHGFSEMLYEYTSSSANNGSGFEGLGDNTYFWNYTCGLALIISRYLPIVGQVAIAGLLANKKYTPESAGTLKTDTVTFGVMTFFVIVIVAALSFFPAQTLGPIAEYFSIY</sequence>
<keyword id="KW-0997">Cell inner membrane</keyword>
<keyword id="KW-1003">Cell membrane</keyword>
<keyword id="KW-0406">Ion transport</keyword>
<keyword id="KW-0472">Membrane</keyword>
<keyword id="KW-0630">Potassium</keyword>
<keyword id="KW-0633">Potassium transport</keyword>
<keyword id="KW-1185">Reference proteome</keyword>
<keyword id="KW-0812">Transmembrane</keyword>
<keyword id="KW-1133">Transmembrane helix</keyword>
<keyword id="KW-0813">Transport</keyword>
<dbReference type="EMBL" id="CP000140">
    <property type="protein sequence ID" value="ABR45610.1"/>
    <property type="molecule type" value="Genomic_DNA"/>
</dbReference>
<dbReference type="RefSeq" id="WP_005858471.1">
    <property type="nucleotide sequence ID" value="NZ_LR215978.1"/>
</dbReference>
<dbReference type="SMR" id="A6LIU6"/>
<dbReference type="STRING" id="435591.BDI_3930"/>
<dbReference type="PaxDb" id="435591-BDI_3930"/>
<dbReference type="GeneID" id="93524082"/>
<dbReference type="KEGG" id="pdi:BDI_3930"/>
<dbReference type="eggNOG" id="COG2060">
    <property type="taxonomic scope" value="Bacteria"/>
</dbReference>
<dbReference type="HOGENOM" id="CLU_018614_3_0_10"/>
<dbReference type="BioCyc" id="PDIS435591:G1G5A-4040-MONOMER"/>
<dbReference type="Proteomes" id="UP000000566">
    <property type="component" value="Chromosome"/>
</dbReference>
<dbReference type="GO" id="GO:0005886">
    <property type="term" value="C:plasma membrane"/>
    <property type="evidence" value="ECO:0007669"/>
    <property type="project" value="UniProtKB-SubCell"/>
</dbReference>
<dbReference type="GO" id="GO:0008556">
    <property type="term" value="F:P-type potassium transmembrane transporter activity"/>
    <property type="evidence" value="ECO:0007669"/>
    <property type="project" value="InterPro"/>
</dbReference>
<dbReference type="GO" id="GO:0030955">
    <property type="term" value="F:potassium ion binding"/>
    <property type="evidence" value="ECO:0007669"/>
    <property type="project" value="UniProtKB-UniRule"/>
</dbReference>
<dbReference type="HAMAP" id="MF_00275">
    <property type="entry name" value="KdpA"/>
    <property type="match status" value="1"/>
</dbReference>
<dbReference type="InterPro" id="IPR004623">
    <property type="entry name" value="KdpA"/>
</dbReference>
<dbReference type="NCBIfam" id="TIGR00680">
    <property type="entry name" value="kdpA"/>
    <property type="match status" value="1"/>
</dbReference>
<dbReference type="PANTHER" id="PTHR30607">
    <property type="entry name" value="POTASSIUM-TRANSPORTING ATPASE A CHAIN"/>
    <property type="match status" value="1"/>
</dbReference>
<dbReference type="PANTHER" id="PTHR30607:SF2">
    <property type="entry name" value="POTASSIUM-TRANSPORTING ATPASE POTASSIUM-BINDING SUBUNIT"/>
    <property type="match status" value="1"/>
</dbReference>
<dbReference type="Pfam" id="PF03814">
    <property type="entry name" value="KdpA"/>
    <property type="match status" value="1"/>
</dbReference>
<dbReference type="PIRSF" id="PIRSF001294">
    <property type="entry name" value="K_ATPaseA"/>
    <property type="match status" value="1"/>
</dbReference>
<evidence type="ECO:0000255" key="1">
    <source>
        <dbReference type="HAMAP-Rule" id="MF_00275"/>
    </source>
</evidence>
<comment type="function">
    <text evidence="1">Part of the high-affinity ATP-driven potassium transport (or Kdp) system, which catalyzes the hydrolysis of ATP coupled with the electrogenic transport of potassium into the cytoplasm. This subunit binds the periplasmic potassium ions and delivers the ions to the membrane domain of KdpB through an intramembrane tunnel.</text>
</comment>
<comment type="subunit">
    <text evidence="1">The system is composed of three essential subunits: KdpA, KdpB and KdpC.</text>
</comment>
<comment type="subcellular location">
    <subcellularLocation>
        <location evidence="1">Cell inner membrane</location>
        <topology evidence="1">Multi-pass membrane protein</topology>
    </subcellularLocation>
</comment>
<comment type="similarity">
    <text evidence="1">Belongs to the KdpA family.</text>
</comment>
<protein>
    <recommendedName>
        <fullName evidence="1">Potassium-transporting ATPase potassium-binding subunit</fullName>
    </recommendedName>
    <alternativeName>
        <fullName evidence="1">ATP phosphohydrolase [potassium-transporting] A chain</fullName>
    </alternativeName>
    <alternativeName>
        <fullName evidence="1">Potassium-binding and translocating subunit A</fullName>
    </alternativeName>
    <alternativeName>
        <fullName evidence="1">Potassium-translocating ATPase A chain</fullName>
    </alternativeName>
</protein>
<proteinExistence type="inferred from homology"/>
<name>KDPA_PARD8</name>